<name>UCHL1_MOUSE</name>
<feature type="chain" id="PRO_0000211058" description="Ubiquitin carboxyl-terminal hydrolase isozyme L1">
    <location>
        <begin position="1"/>
        <end position="220"/>
    </location>
</feature>
<feature type="propeptide" id="PRO_0000414313" description="Removed in mature form" evidence="1">
    <location>
        <begin position="221"/>
        <end position="223"/>
    </location>
</feature>
<feature type="domain" description="UCH catalytic" evidence="4">
    <location>
        <begin position="2"/>
        <end position="221"/>
    </location>
</feature>
<feature type="region of interest" description="Interaction with ubiquitin" evidence="2">
    <location>
        <begin position="5"/>
        <end position="10"/>
    </location>
</feature>
<feature type="region of interest" description="Interaction with ubiquitin" evidence="2">
    <location>
        <begin position="211"/>
        <end position="216"/>
    </location>
</feature>
<feature type="active site" description="Nucleophile" evidence="4 5">
    <location>
        <position position="90"/>
    </location>
</feature>
<feature type="active site" description="Proton donor" evidence="4">
    <location>
        <position position="161"/>
    </location>
</feature>
<feature type="site" description="Transition state stabilizer" evidence="4">
    <location>
        <position position="84"/>
    </location>
</feature>
<feature type="site" description="Important for enzyme activity" evidence="4">
    <location>
        <position position="176"/>
    </location>
</feature>
<feature type="modified residue" description="N-acetylmethionine" evidence="2">
    <location>
        <position position="1"/>
    </location>
</feature>
<feature type="modified residue" description="Phosphoserine" evidence="3">
    <location>
        <position position="125"/>
    </location>
</feature>
<feature type="lipid moiety-binding region" description="S-farnesyl cysteine" evidence="2">
    <location>
        <position position="220"/>
    </location>
</feature>
<feature type="mutagenesis site" description="Abolishes enzymatic activity and ubiquitin binding." evidence="8">
    <original>D</original>
    <variation>K</variation>
    <location>
        <position position="30"/>
    </location>
</feature>
<feature type="mutagenesis site" description="Abolishes enzymatic activity, but does not affect ubiquitin binding." evidence="8 12">
    <original>C</original>
    <variation>S</variation>
    <location>
        <position position="90"/>
    </location>
</feature>
<feature type="sequence conflict" description="In Ref. 2; AAD51029." evidence="15" ref="2">
    <original>E</original>
    <variation>K</variation>
    <location>
        <position position="149"/>
    </location>
</feature>
<proteinExistence type="evidence at protein level"/>
<sequence>MQLKPMEINPEMLNKVLAKLGVAGQWRFADVLGLEEETLGSVPSPACALLLLFPLTAQHENFRKKQIEELKGQEVSPKVYFMKQTIGNSCGTIGLIHAVANNQDKLEFEDGSVLKQFLSETEKLSPEDRAKCFEKNEAIQAAHDSVAQEGQCRVDDKVNFHFILFNNVDGHLYELDGRMPFPVNHGASSEDSLLQDAAKVCREFTEREQGEVRFSAVALCKAA</sequence>
<keyword id="KW-0007">Acetylation</keyword>
<keyword id="KW-0963">Cytoplasm</keyword>
<keyword id="KW-0903">Direct protein sequencing</keyword>
<keyword id="KW-0256">Endoplasmic reticulum</keyword>
<keyword id="KW-0325">Glycoprotein</keyword>
<keyword id="KW-0378">Hydrolase</keyword>
<keyword id="KW-0449">Lipoprotein</keyword>
<keyword id="KW-0472">Membrane</keyword>
<keyword id="KW-0597">Phosphoprotein</keyword>
<keyword id="KW-0636">Prenylation</keyword>
<keyword id="KW-0645">Protease</keyword>
<keyword id="KW-1185">Reference proteome</keyword>
<keyword id="KW-0788">Thiol protease</keyword>
<keyword id="KW-0833">Ubl conjugation pathway</keyword>
<gene>
    <name type="primary">Uchl1</name>
</gene>
<organism>
    <name type="scientific">Mus musculus</name>
    <name type="common">Mouse</name>
    <dbReference type="NCBI Taxonomy" id="10090"/>
    <lineage>
        <taxon>Eukaryota</taxon>
        <taxon>Metazoa</taxon>
        <taxon>Chordata</taxon>
        <taxon>Craniata</taxon>
        <taxon>Vertebrata</taxon>
        <taxon>Euteleostomi</taxon>
        <taxon>Mammalia</taxon>
        <taxon>Eutheria</taxon>
        <taxon>Euarchontoglires</taxon>
        <taxon>Glires</taxon>
        <taxon>Rodentia</taxon>
        <taxon>Myomorpha</taxon>
        <taxon>Muroidea</taxon>
        <taxon>Muridae</taxon>
        <taxon>Murinae</taxon>
        <taxon>Mus</taxon>
        <taxon>Mus</taxon>
    </lineage>
</organism>
<reference key="1">
    <citation type="journal article" date="1999" name="Nat. Genet.">
        <title>Intragenic deletion in the gene encoding ubiquitin carboxy-terminal hydrolase in gad mice.</title>
        <authorList>
            <person name="Saigoh K."/>
            <person name="Wang Y.-L."/>
            <person name="Suh J.G."/>
            <person name="Yamanishi T."/>
            <person name="Sakai Y."/>
            <person name="Kiyosawa H."/>
            <person name="Harada T."/>
            <person name="Ichihara N."/>
            <person name="Wakana S."/>
            <person name="Kikuchi T."/>
            <person name="Wada K."/>
        </authorList>
    </citation>
    <scope>NUCLEOTIDE SEQUENCE [MRNA]</scope>
    <scope>TISSUE SPECIFICITY</scope>
    <scope>DISRUPTION PHENOTYPE</scope>
    <source>
        <tissue>Brain</tissue>
    </source>
</reference>
<reference key="2">
    <citation type="journal article" date="2002" name="Exp. Gerontol.">
        <title>Age-related alterations in the protein expression profile of C57BL/6J mouse pituitaries.</title>
        <authorList>
            <person name="Marzban G."/>
            <person name="Grillari J."/>
            <person name="Reisinger E."/>
            <person name="Hemetsberger T."/>
            <person name="Grabherr R."/>
            <person name="Katinger H."/>
        </authorList>
    </citation>
    <scope>NUCLEOTIDE SEQUENCE [MRNA]</scope>
    <scope>PROTEIN SEQUENCE OF 1-10</scope>
    <scope>TISSUE SPECIFICITY</scope>
    <source>
        <strain>C57BL/6J</strain>
        <tissue>Pituitary</tissue>
    </source>
</reference>
<reference key="3">
    <citation type="journal article" date="2005" name="Science">
        <title>The transcriptional landscape of the mammalian genome.</title>
        <authorList>
            <person name="Carninci P."/>
            <person name="Kasukawa T."/>
            <person name="Katayama S."/>
            <person name="Gough J."/>
            <person name="Frith M.C."/>
            <person name="Maeda N."/>
            <person name="Oyama R."/>
            <person name="Ravasi T."/>
            <person name="Lenhard B."/>
            <person name="Wells C."/>
            <person name="Kodzius R."/>
            <person name="Shimokawa K."/>
            <person name="Bajic V.B."/>
            <person name="Brenner S.E."/>
            <person name="Batalov S."/>
            <person name="Forrest A.R."/>
            <person name="Zavolan M."/>
            <person name="Davis M.J."/>
            <person name="Wilming L.G."/>
            <person name="Aidinis V."/>
            <person name="Allen J.E."/>
            <person name="Ambesi-Impiombato A."/>
            <person name="Apweiler R."/>
            <person name="Aturaliya R.N."/>
            <person name="Bailey T.L."/>
            <person name="Bansal M."/>
            <person name="Baxter L."/>
            <person name="Beisel K.W."/>
            <person name="Bersano T."/>
            <person name="Bono H."/>
            <person name="Chalk A.M."/>
            <person name="Chiu K.P."/>
            <person name="Choudhary V."/>
            <person name="Christoffels A."/>
            <person name="Clutterbuck D.R."/>
            <person name="Crowe M.L."/>
            <person name="Dalla E."/>
            <person name="Dalrymple B.P."/>
            <person name="de Bono B."/>
            <person name="Della Gatta G."/>
            <person name="di Bernardo D."/>
            <person name="Down T."/>
            <person name="Engstrom P."/>
            <person name="Fagiolini M."/>
            <person name="Faulkner G."/>
            <person name="Fletcher C.F."/>
            <person name="Fukushima T."/>
            <person name="Furuno M."/>
            <person name="Futaki S."/>
            <person name="Gariboldi M."/>
            <person name="Georgii-Hemming P."/>
            <person name="Gingeras T.R."/>
            <person name="Gojobori T."/>
            <person name="Green R.E."/>
            <person name="Gustincich S."/>
            <person name="Harbers M."/>
            <person name="Hayashi Y."/>
            <person name="Hensch T.K."/>
            <person name="Hirokawa N."/>
            <person name="Hill D."/>
            <person name="Huminiecki L."/>
            <person name="Iacono M."/>
            <person name="Ikeo K."/>
            <person name="Iwama A."/>
            <person name="Ishikawa T."/>
            <person name="Jakt M."/>
            <person name="Kanapin A."/>
            <person name="Katoh M."/>
            <person name="Kawasawa Y."/>
            <person name="Kelso J."/>
            <person name="Kitamura H."/>
            <person name="Kitano H."/>
            <person name="Kollias G."/>
            <person name="Krishnan S.P."/>
            <person name="Kruger A."/>
            <person name="Kummerfeld S.K."/>
            <person name="Kurochkin I.V."/>
            <person name="Lareau L.F."/>
            <person name="Lazarevic D."/>
            <person name="Lipovich L."/>
            <person name="Liu J."/>
            <person name="Liuni S."/>
            <person name="McWilliam S."/>
            <person name="Madan Babu M."/>
            <person name="Madera M."/>
            <person name="Marchionni L."/>
            <person name="Matsuda H."/>
            <person name="Matsuzawa S."/>
            <person name="Miki H."/>
            <person name="Mignone F."/>
            <person name="Miyake S."/>
            <person name="Morris K."/>
            <person name="Mottagui-Tabar S."/>
            <person name="Mulder N."/>
            <person name="Nakano N."/>
            <person name="Nakauchi H."/>
            <person name="Ng P."/>
            <person name="Nilsson R."/>
            <person name="Nishiguchi S."/>
            <person name="Nishikawa S."/>
            <person name="Nori F."/>
            <person name="Ohara O."/>
            <person name="Okazaki Y."/>
            <person name="Orlando V."/>
            <person name="Pang K.C."/>
            <person name="Pavan W.J."/>
            <person name="Pavesi G."/>
            <person name="Pesole G."/>
            <person name="Petrovsky N."/>
            <person name="Piazza S."/>
            <person name="Reed J."/>
            <person name="Reid J.F."/>
            <person name="Ring B.Z."/>
            <person name="Ringwald M."/>
            <person name="Rost B."/>
            <person name="Ruan Y."/>
            <person name="Salzberg S.L."/>
            <person name="Sandelin A."/>
            <person name="Schneider C."/>
            <person name="Schoenbach C."/>
            <person name="Sekiguchi K."/>
            <person name="Semple C.A."/>
            <person name="Seno S."/>
            <person name="Sessa L."/>
            <person name="Sheng Y."/>
            <person name="Shibata Y."/>
            <person name="Shimada H."/>
            <person name="Shimada K."/>
            <person name="Silva D."/>
            <person name="Sinclair B."/>
            <person name="Sperling S."/>
            <person name="Stupka E."/>
            <person name="Sugiura K."/>
            <person name="Sultana R."/>
            <person name="Takenaka Y."/>
            <person name="Taki K."/>
            <person name="Tammoja K."/>
            <person name="Tan S.L."/>
            <person name="Tang S."/>
            <person name="Taylor M.S."/>
            <person name="Tegner J."/>
            <person name="Teichmann S.A."/>
            <person name="Ueda H.R."/>
            <person name="van Nimwegen E."/>
            <person name="Verardo R."/>
            <person name="Wei C.L."/>
            <person name="Yagi K."/>
            <person name="Yamanishi H."/>
            <person name="Zabarovsky E."/>
            <person name="Zhu S."/>
            <person name="Zimmer A."/>
            <person name="Hide W."/>
            <person name="Bult C."/>
            <person name="Grimmond S.M."/>
            <person name="Teasdale R.D."/>
            <person name="Liu E.T."/>
            <person name="Brusic V."/>
            <person name="Quackenbush J."/>
            <person name="Wahlestedt C."/>
            <person name="Mattick J.S."/>
            <person name="Hume D.A."/>
            <person name="Kai C."/>
            <person name="Sasaki D."/>
            <person name="Tomaru Y."/>
            <person name="Fukuda S."/>
            <person name="Kanamori-Katayama M."/>
            <person name="Suzuki M."/>
            <person name="Aoki J."/>
            <person name="Arakawa T."/>
            <person name="Iida J."/>
            <person name="Imamura K."/>
            <person name="Itoh M."/>
            <person name="Kato T."/>
            <person name="Kawaji H."/>
            <person name="Kawagashira N."/>
            <person name="Kawashima T."/>
            <person name="Kojima M."/>
            <person name="Kondo S."/>
            <person name="Konno H."/>
            <person name="Nakano K."/>
            <person name="Ninomiya N."/>
            <person name="Nishio T."/>
            <person name="Okada M."/>
            <person name="Plessy C."/>
            <person name="Shibata K."/>
            <person name="Shiraki T."/>
            <person name="Suzuki S."/>
            <person name="Tagami M."/>
            <person name="Waki K."/>
            <person name="Watahiki A."/>
            <person name="Okamura-Oho Y."/>
            <person name="Suzuki H."/>
            <person name="Kawai J."/>
            <person name="Hayashizaki Y."/>
        </authorList>
    </citation>
    <scope>NUCLEOTIDE SEQUENCE [LARGE SCALE MRNA]</scope>
    <source>
        <strain>C57BL/6J</strain>
        <tissue>Hippocampus</tissue>
    </source>
</reference>
<reference key="4">
    <citation type="journal article" date="2004" name="Genome Res.">
        <title>The status, quality, and expansion of the NIH full-length cDNA project: the Mammalian Gene Collection (MGC).</title>
        <authorList>
            <consortium name="The MGC Project Team"/>
        </authorList>
    </citation>
    <scope>NUCLEOTIDE SEQUENCE [LARGE SCALE MRNA]</scope>
    <source>
        <tissue>Retina</tissue>
    </source>
</reference>
<reference key="5">
    <citation type="submission" date="2007-07" db="UniProtKB">
        <authorList>
            <person name="Lubec G."/>
            <person name="Kang S.U."/>
            <person name="Klug S."/>
            <person name="Yang J.W."/>
            <person name="Zigmond M."/>
        </authorList>
    </citation>
    <scope>PROTEIN SEQUENCE OF 20-27; 66-78; 116-123; 136-153 AND 158-199</scope>
    <scope>IDENTIFICATION BY MASS SPECTROMETRY</scope>
    <source>
        <strain>C57BL/6J</strain>
        <tissue>Brain</tissue>
        <tissue>Hippocampus</tissue>
    </source>
</reference>
<reference key="6">
    <citation type="journal article" date="2003" name="Hum. Mol. Genet.">
        <title>Ubiquitin carboxy-terminal hydrolase L1 binds to and stabilizes monoubiquitin in neuron.</title>
        <authorList>
            <person name="Osaka H."/>
            <person name="Wang Y.-L."/>
            <person name="Takada K."/>
            <person name="Takizawa S."/>
            <person name="Setsuie R."/>
            <person name="Li H."/>
            <person name="Sato Y."/>
            <person name="Nishikawa K."/>
            <person name="Sun Y.-J."/>
            <person name="Sakurai M."/>
            <person name="Harada T."/>
            <person name="Hara Y."/>
            <person name="Kimura I."/>
            <person name="Chiba S."/>
            <person name="Namikawa K."/>
            <person name="Kiyama H."/>
            <person name="Noda M."/>
            <person name="Aoki S."/>
            <person name="Wada K."/>
        </authorList>
    </citation>
    <scope>FUNCTION</scope>
    <scope>CATALYTIC ACTIVITY</scope>
    <scope>BIOPHYSICOCHEMICAL PROPERTIES</scope>
    <scope>SUBCELLULAR LOCATION</scope>
    <scope>TISSUE SPECIFICITY</scope>
    <scope>DISRUPTION PHENOTYPE</scope>
    <scope>MUTAGENESIS OF ASP-30 AND CYS-90</scope>
</reference>
<reference key="7">
    <citation type="journal article" date="2004" name="Am. J. Pathol.">
        <title>Role of ubiquitin carboxy terminal hydrolase-L1 in neural cell apoptosis induced by ischemic retinal injury in vivo.</title>
        <authorList>
            <person name="Harada T."/>
            <person name="Harada C."/>
            <person name="Wang Y.-L."/>
            <person name="Osaka H."/>
            <person name="Amanai K."/>
            <person name="Tanaka K."/>
            <person name="Takizawa S."/>
            <person name="Setsuie R."/>
            <person name="Sakurai M."/>
            <person name="Sato Y."/>
            <person name="Noda M."/>
            <person name="Wada K."/>
        </authorList>
    </citation>
    <scope>TISSUE SPECIFICITY</scope>
</reference>
<reference key="8">
    <citation type="journal article" date="2005" name="Proc. Natl. Acad. Sci. U.S.A.">
        <title>Replaceable neurons and neurodegenerative disease share depressed UCHL1 levels.</title>
        <authorList>
            <person name="Lombardino A.J."/>
            <person name="Li X.-C."/>
            <person name="Hertel M."/>
            <person name="Nottebohm F."/>
        </authorList>
    </citation>
    <scope>TISSUE SPECIFICITY</scope>
</reference>
<reference key="9">
    <citation type="journal article" date="2010" name="Cell">
        <title>A tissue-specific atlas of mouse protein phosphorylation and expression.</title>
        <authorList>
            <person name="Huttlin E.L."/>
            <person name="Jedrychowski M.P."/>
            <person name="Elias J.E."/>
            <person name="Goswami T."/>
            <person name="Rad R."/>
            <person name="Beausoleil S.A."/>
            <person name="Villen J."/>
            <person name="Haas W."/>
            <person name="Sowa M.E."/>
            <person name="Gygi S.P."/>
        </authorList>
    </citation>
    <scope>IDENTIFICATION BY MASS SPECTROMETRY [LARGE SCALE ANALYSIS]</scope>
    <source>
        <tissue>Brain</tissue>
        <tissue>Brown adipose tissue</tissue>
        <tissue>Heart</tissue>
        <tissue>Liver</tissue>
        <tissue>Lung</tissue>
        <tissue>Testis</tissue>
    </source>
</reference>
<reference key="10">
    <citation type="journal article" date="2019" name="J. Immunol.">
        <title>Deubiquitinating Enzyme UCH-L1 Promotes Dendritic Cell Antigen Cross-Presentation by Favoring Recycling of MHC Class I Molecules.</title>
        <authorList>
            <person name="Reinicke A.T."/>
            <person name="Raczkowski F."/>
            <person name="Muehlig M."/>
            <person name="Schmucker P."/>
            <person name="Lischke T."/>
            <person name="Reichelt J."/>
            <person name="Schneider E."/>
            <person name="Zielinski S."/>
            <person name="Sachs M."/>
            <person name="Jurack E."/>
            <person name="Tolosa E."/>
            <person name="Kurts C."/>
            <person name="Mittruecker H.W."/>
            <person name="Meyer-Schwesinger C."/>
        </authorList>
    </citation>
    <scope>FUNCTION</scope>
    <scope>DISRUPTION PHENOTYPE</scope>
    <scope>INDUCTION BY LPS</scope>
</reference>
<reference key="11">
    <citation type="journal article" date="2020" name="Sci. Adv.">
        <title>The deubiquitinase UCHL1 regulates cardiac hypertrophy by stabilizing epidermal growth factor receptor.</title>
        <authorList>
            <person name="Bi H.L."/>
            <person name="Zhang X.L."/>
            <person name="Zhang Y.L."/>
            <person name="Xie X."/>
            <person name="Xia Y.L."/>
            <person name="Du J."/>
            <person name="Li H.H."/>
        </authorList>
    </citation>
    <scope>FUNCTION</scope>
    <scope>CATALYTIC ACTIVITY</scope>
    <scope>MUTAGENESIS OF CYS-90</scope>
</reference>
<reference key="12">
    <citation type="journal article" date="2020" name="PLoS ONE">
        <title>UCHL1 regulates oxidative activity in skeletal muscle.</title>
        <authorList>
            <person name="Gao H."/>
            <person name="Antony R."/>
            <person name="Srinivasan R."/>
            <person name="Wu P."/>
            <person name="Wang X."/>
            <person name="Li Y."/>
        </authorList>
    </citation>
    <scope>FUNCTION</scope>
    <scope>SUBCELLULAR LOCATION</scope>
    <scope>DISRUPTION PHENOTYPE</scope>
    <scope>TISSUE SPECIFICITY</scope>
</reference>
<reference key="13">
    <citation type="journal article" date="2023" name="Int. J. Biol. Sci.">
        <title>The deubiquitinase UCHL1 negatively controls osteoclastogenesis by regulating TAZ/NFATC1 signalling.</title>
        <authorList>
            <person name="Feng Z."/>
            <person name="Tao S."/>
            <person name="Huang Z."/>
            <person name="Zheng B."/>
            <person name="Kong X."/>
            <person name="Xiang Y."/>
            <person name="Zhang Q."/>
            <person name="Song H."/>
            <person name="Xu Z."/>
            <person name="Wei X."/>
            <person name="Zhao F."/>
            <person name="Chen J."/>
        </authorList>
    </citation>
    <scope>FUNCTION</scope>
    <scope>SUBCELLULAR LOCATION</scope>
</reference>
<accession>Q9R0P9</accession>
<accession>Q9R122</accession>
<dbReference type="EC" id="3.4.19.12" evidence="8 12"/>
<dbReference type="EMBL" id="AB025313">
    <property type="protein sequence ID" value="BAA84083.1"/>
    <property type="molecule type" value="mRNA"/>
</dbReference>
<dbReference type="EMBL" id="AF172334">
    <property type="protein sequence ID" value="AAD51029.1"/>
    <property type="molecule type" value="mRNA"/>
</dbReference>
<dbReference type="EMBL" id="AK013729">
    <property type="protein sequence ID" value="BAB28976.1"/>
    <property type="molecule type" value="mRNA"/>
</dbReference>
<dbReference type="EMBL" id="BC039177">
    <property type="protein sequence ID" value="AAH39177.1"/>
    <property type="molecule type" value="mRNA"/>
</dbReference>
<dbReference type="CCDS" id="CCDS19315.1"/>
<dbReference type="RefSeq" id="NP_035800.2">
    <property type="nucleotide sequence ID" value="NM_011670.2"/>
</dbReference>
<dbReference type="SMR" id="Q9R0P9"/>
<dbReference type="BioGRID" id="204423">
    <property type="interactions" value="35"/>
</dbReference>
<dbReference type="FunCoup" id="Q9R0P9">
    <property type="interactions" value="694"/>
</dbReference>
<dbReference type="IntAct" id="Q9R0P9">
    <property type="interactions" value="8"/>
</dbReference>
<dbReference type="MINT" id="Q9R0P9"/>
<dbReference type="STRING" id="10090.ENSMUSP00000031131"/>
<dbReference type="BindingDB" id="Q9R0P9"/>
<dbReference type="MEROPS" id="C12.001"/>
<dbReference type="iPTMnet" id="Q9R0P9"/>
<dbReference type="PhosphoSitePlus" id="Q9R0P9"/>
<dbReference type="SwissPalm" id="Q9R0P9"/>
<dbReference type="REPRODUCTION-2DPAGE" id="IPI00313962"/>
<dbReference type="REPRODUCTION-2DPAGE" id="Q9R0P9"/>
<dbReference type="jPOST" id="Q9R0P9"/>
<dbReference type="PaxDb" id="10090-ENSMUSP00000031131"/>
<dbReference type="PeptideAtlas" id="Q9R0P9"/>
<dbReference type="ProteomicsDB" id="298189"/>
<dbReference type="Antibodypedia" id="1062">
    <property type="antibodies" value="2366 antibodies from 52 providers"/>
</dbReference>
<dbReference type="DNASU" id="22223"/>
<dbReference type="Ensembl" id="ENSMUST00000031131.11">
    <property type="protein sequence ID" value="ENSMUSP00000031131.10"/>
    <property type="gene ID" value="ENSMUSG00000029223.13"/>
</dbReference>
<dbReference type="GeneID" id="22223"/>
<dbReference type="KEGG" id="mmu:22223"/>
<dbReference type="UCSC" id="uc008xpf.2">
    <property type="organism name" value="mouse"/>
</dbReference>
<dbReference type="AGR" id="MGI:103149"/>
<dbReference type="CTD" id="7345"/>
<dbReference type="MGI" id="MGI:103149">
    <property type="gene designation" value="Uchl1"/>
</dbReference>
<dbReference type="VEuPathDB" id="HostDB:ENSMUSG00000029223"/>
<dbReference type="eggNOG" id="KOG1415">
    <property type="taxonomic scope" value="Eukaryota"/>
</dbReference>
<dbReference type="GeneTree" id="ENSGT00940000157306"/>
<dbReference type="HOGENOM" id="CLU_054406_2_0_1"/>
<dbReference type="InParanoid" id="Q9R0P9"/>
<dbReference type="OMA" id="CISNGEA"/>
<dbReference type="OrthoDB" id="427186at2759"/>
<dbReference type="PhylomeDB" id="Q9R0P9"/>
<dbReference type="TreeFam" id="TF316166"/>
<dbReference type="BRENDA" id="3.4.19.12">
    <property type="organism ID" value="3474"/>
</dbReference>
<dbReference type="Reactome" id="R-MMU-5689603">
    <property type="pathway name" value="UCH proteinases"/>
</dbReference>
<dbReference type="SABIO-RK" id="Q9R0P9"/>
<dbReference type="BioGRID-ORCS" id="22223">
    <property type="hits" value="0 hits in 79 CRISPR screens"/>
</dbReference>
<dbReference type="CD-CODE" id="CE726F99">
    <property type="entry name" value="Postsynaptic density"/>
</dbReference>
<dbReference type="ChiTaRS" id="Uchl1">
    <property type="organism name" value="mouse"/>
</dbReference>
<dbReference type="PRO" id="PR:Q9R0P9"/>
<dbReference type="Proteomes" id="UP000000589">
    <property type="component" value="Chromosome 5"/>
</dbReference>
<dbReference type="RNAct" id="Q9R0P9">
    <property type="molecule type" value="protein"/>
</dbReference>
<dbReference type="Bgee" id="ENSMUSG00000029223">
    <property type="expression patterns" value="Expressed in superior cervical ganglion and 240 other cell types or tissues"/>
</dbReference>
<dbReference type="GO" id="GO:0030424">
    <property type="term" value="C:axon"/>
    <property type="evidence" value="ECO:0000314"/>
    <property type="project" value="MGI"/>
</dbReference>
<dbReference type="GO" id="GO:1904115">
    <property type="term" value="C:axon cytoplasm"/>
    <property type="evidence" value="ECO:0007669"/>
    <property type="project" value="GOC"/>
</dbReference>
<dbReference type="GO" id="GO:0005737">
    <property type="term" value="C:cytoplasm"/>
    <property type="evidence" value="ECO:0000314"/>
    <property type="project" value="UniProtKB"/>
</dbReference>
<dbReference type="GO" id="GO:0005829">
    <property type="term" value="C:cytosol"/>
    <property type="evidence" value="ECO:0000314"/>
    <property type="project" value="MGI"/>
</dbReference>
<dbReference type="GO" id="GO:0005789">
    <property type="term" value="C:endoplasmic reticulum membrane"/>
    <property type="evidence" value="ECO:0007669"/>
    <property type="project" value="UniProtKB-SubCell"/>
</dbReference>
<dbReference type="GO" id="GO:0043209">
    <property type="term" value="C:myelin sheath"/>
    <property type="evidence" value="ECO:0007005"/>
    <property type="project" value="UniProtKB"/>
</dbReference>
<dbReference type="GO" id="GO:0044306">
    <property type="term" value="C:neuron projection terminus"/>
    <property type="evidence" value="ECO:0000314"/>
    <property type="project" value="MGI"/>
</dbReference>
<dbReference type="GO" id="GO:0043025">
    <property type="term" value="C:neuronal cell body"/>
    <property type="evidence" value="ECO:0000314"/>
    <property type="project" value="MGI"/>
</dbReference>
<dbReference type="GO" id="GO:0005654">
    <property type="term" value="C:nucleoplasm"/>
    <property type="evidence" value="ECO:0007669"/>
    <property type="project" value="Ensembl"/>
</dbReference>
<dbReference type="GO" id="GO:0005886">
    <property type="term" value="C:plasma membrane"/>
    <property type="evidence" value="ECO:0007669"/>
    <property type="project" value="Ensembl"/>
</dbReference>
<dbReference type="GO" id="GO:0031694">
    <property type="term" value="F:alpha-2A adrenergic receptor binding"/>
    <property type="evidence" value="ECO:0007669"/>
    <property type="project" value="Ensembl"/>
</dbReference>
<dbReference type="GO" id="GO:0004843">
    <property type="term" value="F:cysteine-type deubiquitinase activity"/>
    <property type="evidence" value="ECO:0000314"/>
    <property type="project" value="MGI"/>
</dbReference>
<dbReference type="GO" id="GO:0004197">
    <property type="term" value="F:cysteine-type endopeptidase activity"/>
    <property type="evidence" value="ECO:0000250"/>
    <property type="project" value="UniProtKB"/>
</dbReference>
<dbReference type="GO" id="GO:0008242">
    <property type="term" value="F:omega peptidase activity"/>
    <property type="evidence" value="ECO:0000250"/>
    <property type="project" value="UniProtKB"/>
</dbReference>
<dbReference type="GO" id="GO:0043022">
    <property type="term" value="F:ribosome binding"/>
    <property type="evidence" value="ECO:0000314"/>
    <property type="project" value="MGI"/>
</dbReference>
<dbReference type="GO" id="GO:0043130">
    <property type="term" value="F:ubiquitin binding"/>
    <property type="evidence" value="ECO:0000314"/>
    <property type="project" value="MGI"/>
</dbReference>
<dbReference type="GO" id="GO:0031625">
    <property type="term" value="F:ubiquitin protein ligase binding"/>
    <property type="evidence" value="ECO:0007669"/>
    <property type="project" value="Ensembl"/>
</dbReference>
<dbReference type="GO" id="GO:0007628">
    <property type="term" value="P:adult walking behavior"/>
    <property type="evidence" value="ECO:0000315"/>
    <property type="project" value="MGI"/>
</dbReference>
<dbReference type="GO" id="GO:0007412">
    <property type="term" value="P:axon target recognition"/>
    <property type="evidence" value="ECO:0000315"/>
    <property type="project" value="MGI"/>
</dbReference>
<dbReference type="GO" id="GO:0019896">
    <property type="term" value="P:axonal transport of mitochondrion"/>
    <property type="evidence" value="ECO:0000315"/>
    <property type="project" value="MGI"/>
</dbReference>
<dbReference type="GO" id="GO:0007409">
    <property type="term" value="P:axonogenesis"/>
    <property type="evidence" value="ECO:0000315"/>
    <property type="project" value="MGI"/>
</dbReference>
<dbReference type="GO" id="GO:0071466">
    <property type="term" value="P:cellular response to xenobiotic stimulus"/>
    <property type="evidence" value="ECO:0000314"/>
    <property type="project" value="MGI"/>
</dbReference>
<dbReference type="GO" id="GO:0042755">
    <property type="term" value="P:eating behavior"/>
    <property type="evidence" value="ECO:0000316"/>
    <property type="project" value="MGI"/>
</dbReference>
<dbReference type="GO" id="GO:0002176">
    <property type="term" value="P:male germ cell proliferation"/>
    <property type="evidence" value="ECO:0000315"/>
    <property type="project" value="MGI"/>
</dbReference>
<dbReference type="GO" id="GO:0055001">
    <property type="term" value="P:muscle cell development"/>
    <property type="evidence" value="ECO:0000316"/>
    <property type="project" value="MGI"/>
</dbReference>
<dbReference type="GO" id="GO:0050905">
    <property type="term" value="P:neuromuscular process"/>
    <property type="evidence" value="ECO:0000315"/>
    <property type="project" value="MGI"/>
</dbReference>
<dbReference type="GO" id="GO:0045821">
    <property type="term" value="P:positive regulation of glycolytic process"/>
    <property type="evidence" value="ECO:0007669"/>
    <property type="project" value="Ensembl"/>
</dbReference>
<dbReference type="GO" id="GO:0016579">
    <property type="term" value="P:protein deubiquitination"/>
    <property type="evidence" value="ECO:0000250"/>
    <property type="project" value="UniProtKB"/>
</dbReference>
<dbReference type="GO" id="GO:0002931">
    <property type="term" value="P:response to ischemia"/>
    <property type="evidence" value="ECO:0000315"/>
    <property type="project" value="MGI"/>
</dbReference>
<dbReference type="GO" id="GO:0006511">
    <property type="term" value="P:ubiquitin-dependent protein catabolic process"/>
    <property type="evidence" value="ECO:0007669"/>
    <property type="project" value="Ensembl"/>
</dbReference>
<dbReference type="CDD" id="cd09616">
    <property type="entry name" value="Peptidase_C12_UCH_L1_L3"/>
    <property type="match status" value="1"/>
</dbReference>
<dbReference type="FunFam" id="3.40.532.10:FF:000004">
    <property type="entry name" value="Ubiquitin carboxyl-terminal hydrolase"/>
    <property type="match status" value="1"/>
</dbReference>
<dbReference type="Gene3D" id="3.40.532.10">
    <property type="entry name" value="Peptidase C12, ubiquitin carboxyl-terminal hydrolase"/>
    <property type="match status" value="1"/>
</dbReference>
<dbReference type="InterPro" id="IPR038765">
    <property type="entry name" value="Papain-like_cys_pep_sf"/>
</dbReference>
<dbReference type="InterPro" id="IPR001578">
    <property type="entry name" value="Peptidase_C12_UCH"/>
</dbReference>
<dbReference type="InterPro" id="IPR036959">
    <property type="entry name" value="Peptidase_C12_UCH_sf"/>
</dbReference>
<dbReference type="InterPro" id="IPR057254">
    <property type="entry name" value="UCH_AS"/>
</dbReference>
<dbReference type="PANTHER" id="PTHR10589">
    <property type="entry name" value="UBIQUITIN CARBOXYL-TERMINAL HYDROLASE"/>
    <property type="match status" value="1"/>
</dbReference>
<dbReference type="PANTHER" id="PTHR10589:SF19">
    <property type="entry name" value="UBIQUITIN CARBOXYL-TERMINAL HYDROLASE ISOZYME L1"/>
    <property type="match status" value="1"/>
</dbReference>
<dbReference type="Pfam" id="PF01088">
    <property type="entry name" value="Peptidase_C12"/>
    <property type="match status" value="1"/>
</dbReference>
<dbReference type="PRINTS" id="PR00707">
    <property type="entry name" value="UBCTHYDRLASE"/>
</dbReference>
<dbReference type="SUPFAM" id="SSF54001">
    <property type="entry name" value="Cysteine proteinases"/>
    <property type="match status" value="1"/>
</dbReference>
<dbReference type="PROSITE" id="PS00140">
    <property type="entry name" value="UCH_1"/>
    <property type="match status" value="1"/>
</dbReference>
<dbReference type="PROSITE" id="PS52048">
    <property type="entry name" value="UCH_DOMAIN"/>
    <property type="match status" value="1"/>
</dbReference>
<protein>
    <recommendedName>
        <fullName>Ubiquitin carboxyl-terminal hydrolase isozyme L1</fullName>
        <shortName>UCH-L1</shortName>
        <ecNumber evidence="8 12">3.4.19.12</ecNumber>
    </recommendedName>
    <alternativeName>
        <fullName>Neuron cytoplasmic protein 9.5</fullName>
    </alternativeName>
    <alternativeName>
        <fullName>PGP 9.5</fullName>
        <shortName>PGP9.5</shortName>
    </alternativeName>
    <alternativeName>
        <fullName>Ubiquitin thioesterase L1</fullName>
    </alternativeName>
</protein>
<evidence type="ECO:0000250" key="1"/>
<evidence type="ECO:0000250" key="2">
    <source>
        <dbReference type="UniProtKB" id="P09936"/>
    </source>
</evidence>
<evidence type="ECO:0000250" key="3">
    <source>
        <dbReference type="UniProtKB" id="Q00981"/>
    </source>
</evidence>
<evidence type="ECO:0000255" key="4">
    <source>
        <dbReference type="PROSITE-ProRule" id="PRU01393"/>
    </source>
</evidence>
<evidence type="ECO:0000255" key="5">
    <source>
        <dbReference type="PROSITE-ProRule" id="PRU10091"/>
    </source>
</evidence>
<evidence type="ECO:0000269" key="6">
    <source>
    </source>
</evidence>
<evidence type="ECO:0000269" key="7">
    <source>
    </source>
</evidence>
<evidence type="ECO:0000269" key="8">
    <source>
    </source>
</evidence>
<evidence type="ECO:0000269" key="9">
    <source>
    </source>
</evidence>
<evidence type="ECO:0000269" key="10">
    <source>
    </source>
</evidence>
<evidence type="ECO:0000269" key="11">
    <source>
    </source>
</evidence>
<evidence type="ECO:0000269" key="12">
    <source>
    </source>
</evidence>
<evidence type="ECO:0000269" key="13">
    <source>
    </source>
</evidence>
<evidence type="ECO:0000269" key="14">
    <source>
    </source>
</evidence>
<evidence type="ECO:0000305" key="15"/>
<comment type="function">
    <text evidence="2 8 11 12 13 14">Deubiquitinase that plays a role in the regulation of several processes such as maintenance of synaptic function, cardiac function, inflammatory response or osteoclastogenesis (PubMed:31492742, PubMed:32494592, PubMed:37215988). Abrogates the ubiquitination of multiple proteins including WWTR1/TAZ, EGFR, HIF1A and beta-site amyloid precursor protein cleaving enzyme 1/BACE1. In addition, recognizes and hydrolyzes a peptide bond at the C-terminal glycine of ubiquitin to maintain a stable pool of monoubiquitin that is a key requirement for the ubiquitin-proteasome and the autophagy-lysosome pathways (By similarity). Regulates amyloid precursor protein/APP processing by promoting BACE1 degradation resulting in decreased amyloid beta production (By similarity). Plays a role in the immune response by regulating the ability of MHC I molecules to reach cross-presentation compartments competent for generating Ag-MHC I complexes (PubMed:31492742). Mediates the 'Lys-48'-linked deubiquitination of the transcriptional coactivator WWTR1/TAZ leading to its stabilization and inhibition of osteoclastogenesis (PubMed:37215988). Deubiquitinates and stabilizes epidermal growth factor receptor EGFR to prevent its degradation and to activate its downstream mediators (PubMed:32494592). Modulates oxidative activity in skeletal muscle by regulating key mitochondrial oxidative proteins (PubMed:33137160). Enhances the activity of hypoxia-inducible factor 1-alpha/HIF1A by abrogateing its VHL E3 ligase-mediated ubiquitination and consequently inhibiting its degradation (By similarity).</text>
</comment>
<comment type="catalytic activity">
    <reaction evidence="8 12">
        <text>Thiol-dependent hydrolysis of ester, thioester, amide, peptide and isopeptide bonds formed by the C-terminal Gly of ubiquitin (a 76-residue protein attached to proteins as an intracellular targeting signal).</text>
        <dbReference type="EC" id="3.4.19.12"/>
    </reaction>
</comment>
<comment type="biophysicochemical properties">
    <kinetics>
        <KM evidence="8">116 nM for Ub-AMC</KM>
    </kinetics>
</comment>
<comment type="subunit">
    <text evidence="1">Monomer. Homodimer. Interacts with COPS5 and SNCA (By similarity).</text>
</comment>
<comment type="subcellular location">
    <subcellularLocation>
        <location evidence="8 13 14">Cytoplasm</location>
    </subcellularLocation>
    <subcellularLocation>
        <location evidence="1">Endoplasmic reticulum membrane</location>
        <topology evidence="1">Lipid-anchor</topology>
    </subcellularLocation>
    <text evidence="13">Localizes near and/or within mitochondria to potentially interact with mitochondrial proteins.</text>
</comment>
<comment type="tissue specificity">
    <text evidence="6 7 8 9 10 13">Expressed in brain, where it is found in neurons but not in oligodendrocytes or astrocytes. Found in the ganglion cell layer and the inner nuclear layer of the retina (at protein level). Expressed in brain and testis. In the brain, expression is at its lowest in replaceable neurons of hippocampus and olfactory bulb. Highly expressed in senescent pituitary. In skeletal muscle, primarily expressed in oxidative muscle fibers (PubMed:33137160).</text>
</comment>
<comment type="induction">
    <text evidence="11">By LPS, whereas stimulation with IFN-gamma decreases expression.</text>
</comment>
<comment type="PTM">
    <text evidence="1">O-glycosylated.</text>
</comment>
<comment type="disruption phenotype">
    <text evidence="6 8 11 13">Mice show sensory ataxia at an early stage, followed by motor ataxia at a later stage. They have reduced levels of monoubiquitin in the nervous system, and increased resistance to retinal ischemia. In addition, a significant reduction in the generation and proliferation of Ag-specific CD8, but not CD4, T-cells is observed showing that the deletion affects the ability to mount an Ag-specific CD8 T-cell response (PubMed:31492742). UCHL1-skeletal muscle specific gene knockout leads to reduced oxidative muscle fibers and oxidative activity (PubMed:33137160).</text>
</comment>
<comment type="miscellaneous">
    <text evidence="1">In contrast to UCHL3, does not hydrolyze a peptide bond at the C-terminal glycine of NEDD8.</text>
</comment>
<comment type="similarity">
    <text evidence="15">Belongs to the peptidase C12 family.</text>
</comment>
<comment type="caution">
    <text evidence="2">The homodimer may have ATP-independent ubiquitin ligase activity. However, in another study, UCHL1 was shown to lack ubiquitin ligase activity.</text>
</comment>